<sequence length="298" mass="33865">MFNNDKVKIGICPIGWTNDDMPDLGKENTFEQAVSEMALAGFKGTEIGNKYPKDVKVLKRALEMRNLQIASAWFSSFLTTKPYEETEKEFIAHRDFLHAMGSKVIVVSEQGHSIQGQMETPIFDGKHHFNEEEWNLLAHGLNKLGQLAADKEMRIVYHHHMGTGVQTTEEIDKLMSVTDENLVYLLFDTGHLVYSGENPVEILKKYVQRIKHVHLKDIRPEIVSKVKNEKLSFLKGVRAGAFTVPGDGSIDFEPIFKILAENNYEGWLMIEAEQDPSIANPLEYAIKGRQYIKEKASI</sequence>
<name>IOLE_CLOBB</name>
<accession>B2TJ88</accession>
<keyword id="KW-0170">Cobalt</keyword>
<keyword id="KW-0456">Lyase</keyword>
<keyword id="KW-0464">Manganese</keyword>
<comment type="function">
    <text evidence="1">Catalyzes the dehydration of inosose (2-keto-myo-inositol, 2KMI or 2,4,6/3,5-pentahydroxycyclohexanone) to 3D-(3,5/4)-trihydroxycyclohexane-1,2-dione (D-2,3-diketo-4-deoxy-epi-inositol).</text>
</comment>
<comment type="catalytic activity">
    <reaction evidence="1">
        <text>scyllo-inosose = 3D-3,5/4-trihydroxycyclohexane-1,2-dione + H2O</text>
        <dbReference type="Rhea" id="RHEA:14065"/>
        <dbReference type="ChEBI" id="CHEBI:15377"/>
        <dbReference type="ChEBI" id="CHEBI:17811"/>
        <dbReference type="ChEBI" id="CHEBI:28446"/>
        <dbReference type="EC" id="4.2.1.44"/>
    </reaction>
</comment>
<comment type="cofactor">
    <cofactor evidence="1">
        <name>glutathione</name>
        <dbReference type="ChEBI" id="CHEBI:57925"/>
    </cofactor>
</comment>
<comment type="cofactor">
    <cofactor evidence="1">
        <name>Co(2+)</name>
        <dbReference type="ChEBI" id="CHEBI:48828"/>
    </cofactor>
    <cofactor evidence="1">
        <name>Mn(2+)</name>
        <dbReference type="ChEBI" id="CHEBI:29035"/>
    </cofactor>
</comment>
<comment type="pathway">
    <text evidence="1">Polyol metabolism; myo-inositol degradation into acetyl-CoA; acetyl-CoA from myo-inositol: step 2/7.</text>
</comment>
<comment type="similarity">
    <text evidence="1">Belongs to the IolE/MocC family.</text>
</comment>
<dbReference type="EC" id="4.2.1.44" evidence="1"/>
<dbReference type="EMBL" id="CP001056">
    <property type="protein sequence ID" value="ACD24438.1"/>
    <property type="molecule type" value="Genomic_DNA"/>
</dbReference>
<dbReference type="SMR" id="B2TJ88"/>
<dbReference type="KEGG" id="cbk:CLL_A1306"/>
<dbReference type="PATRIC" id="fig|935198.13.peg.1252"/>
<dbReference type="HOGENOM" id="CLU_059523_0_0_9"/>
<dbReference type="UniPathway" id="UPA00076">
    <property type="reaction ID" value="UER00144"/>
</dbReference>
<dbReference type="Proteomes" id="UP000001195">
    <property type="component" value="Chromosome"/>
</dbReference>
<dbReference type="GO" id="GO:0030145">
    <property type="term" value="F:manganese ion binding"/>
    <property type="evidence" value="ECO:0007669"/>
    <property type="project" value="UniProtKB-UniRule"/>
</dbReference>
<dbReference type="GO" id="GO:0050114">
    <property type="term" value="F:myo-inosose-2 dehydratase activity"/>
    <property type="evidence" value="ECO:0007669"/>
    <property type="project" value="UniProtKB-UniRule"/>
</dbReference>
<dbReference type="GO" id="GO:0019310">
    <property type="term" value="P:inositol catabolic process"/>
    <property type="evidence" value="ECO:0007669"/>
    <property type="project" value="UniProtKB-UniRule"/>
</dbReference>
<dbReference type="Gene3D" id="3.20.20.150">
    <property type="entry name" value="Divalent-metal-dependent TIM barrel enzymes"/>
    <property type="match status" value="1"/>
</dbReference>
<dbReference type="HAMAP" id="MF_01672">
    <property type="entry name" value="IolE"/>
    <property type="match status" value="1"/>
</dbReference>
<dbReference type="InterPro" id="IPR023952">
    <property type="entry name" value="IolE"/>
</dbReference>
<dbReference type="InterPro" id="IPR030823">
    <property type="entry name" value="IolE/MocC"/>
</dbReference>
<dbReference type="InterPro" id="IPR050312">
    <property type="entry name" value="IolE/XylAMocC-like"/>
</dbReference>
<dbReference type="InterPro" id="IPR036237">
    <property type="entry name" value="Xyl_isomerase-like_sf"/>
</dbReference>
<dbReference type="InterPro" id="IPR013022">
    <property type="entry name" value="Xyl_isomerase-like_TIM-brl"/>
</dbReference>
<dbReference type="NCBIfam" id="TIGR04379">
    <property type="entry name" value="myo_inos_iolE"/>
    <property type="match status" value="1"/>
</dbReference>
<dbReference type="PANTHER" id="PTHR12110">
    <property type="entry name" value="HYDROXYPYRUVATE ISOMERASE"/>
    <property type="match status" value="1"/>
</dbReference>
<dbReference type="PANTHER" id="PTHR12110:SF41">
    <property type="entry name" value="INOSOSE DEHYDRATASE"/>
    <property type="match status" value="1"/>
</dbReference>
<dbReference type="Pfam" id="PF01261">
    <property type="entry name" value="AP_endonuc_2"/>
    <property type="match status" value="1"/>
</dbReference>
<dbReference type="SUPFAM" id="SSF51658">
    <property type="entry name" value="Xylose isomerase-like"/>
    <property type="match status" value="1"/>
</dbReference>
<organism>
    <name type="scientific">Clostridium botulinum (strain Eklund 17B / Type B)</name>
    <dbReference type="NCBI Taxonomy" id="935198"/>
    <lineage>
        <taxon>Bacteria</taxon>
        <taxon>Bacillati</taxon>
        <taxon>Bacillota</taxon>
        <taxon>Clostridia</taxon>
        <taxon>Eubacteriales</taxon>
        <taxon>Clostridiaceae</taxon>
        <taxon>Clostridium</taxon>
    </lineage>
</organism>
<gene>
    <name evidence="1" type="primary">iolE</name>
    <name type="ordered locus">CLL_A1306</name>
</gene>
<feature type="chain" id="PRO_0000352363" description="Inosose dehydratase">
    <location>
        <begin position="1"/>
        <end position="298"/>
    </location>
</feature>
<reference key="1">
    <citation type="submission" date="2008-04" db="EMBL/GenBank/DDBJ databases">
        <title>Complete sequence of Clostridium botulinum strain Eklund.</title>
        <authorList>
            <person name="Brinkac L.M."/>
            <person name="Brown J.L."/>
            <person name="Bruce D."/>
            <person name="Detter C."/>
            <person name="Munk C."/>
            <person name="Smith L.A."/>
            <person name="Smith T.J."/>
            <person name="Sutton G."/>
            <person name="Brettin T.S."/>
        </authorList>
    </citation>
    <scope>NUCLEOTIDE SEQUENCE [LARGE SCALE GENOMIC DNA]</scope>
    <source>
        <strain>Eklund 17B / Type B</strain>
    </source>
</reference>
<proteinExistence type="inferred from homology"/>
<protein>
    <recommendedName>
        <fullName evidence="1">Inosose dehydratase</fullName>
        <ecNumber evidence="1">4.2.1.44</ecNumber>
    </recommendedName>
    <alternativeName>
        <fullName evidence="1">2-keto-myo-inositol dehydratase</fullName>
        <shortName evidence="1">2KMI dehydratase</shortName>
    </alternativeName>
</protein>
<evidence type="ECO:0000255" key="1">
    <source>
        <dbReference type="HAMAP-Rule" id="MF_01672"/>
    </source>
</evidence>